<evidence type="ECO:0000250" key="1">
    <source>
        <dbReference type="UniProtKB" id="Q05048"/>
    </source>
</evidence>
<evidence type="ECO:0000255" key="2"/>
<evidence type="ECO:0000269" key="3">
    <source>
    </source>
</evidence>
<evidence type="ECO:0000303" key="4">
    <source>
    </source>
</evidence>
<evidence type="ECO:0000303" key="5">
    <source>
    </source>
</evidence>
<evidence type="ECO:0000305" key="6"/>
<evidence type="ECO:0000312" key="7">
    <source>
        <dbReference type="Araport" id="AT5G60940"/>
    </source>
</evidence>
<evidence type="ECO:0000312" key="8">
    <source>
        <dbReference type="EMBL" id="AAM61334.1"/>
    </source>
</evidence>
<evidence type="ECO:0000312" key="9">
    <source>
        <dbReference type="EMBL" id="BAB10643.1"/>
    </source>
</evidence>
<comment type="function">
    <text evidence="1">One of the multiple factors required for polyadenylation and 3'-end cleavage of pre-mRNAs. May be responsible for the interaction of CSTF with other factors to form a stable complex on the pre-mRNA.</text>
</comment>
<comment type="subunit">
    <text evidence="1 3">Homodimer. Belongs to the CSTF complex (By similarity). Forms a complex with cleavage and polyadenylation specificity factor (CPSF) subunits CSTF64, PABN3, CPSF30, FIPS5 and CPSF100 (PubMed:18479511).</text>
</comment>
<comment type="subcellular location">
    <subcellularLocation>
        <location evidence="1">Nucleus</location>
    </subcellularLocation>
</comment>
<comment type="alternative products">
    <event type="alternative splicing"/>
    <isoform>
        <id>Q8L4J2-1</id>
        <name>1</name>
        <sequence type="displayed"/>
    </isoform>
    <isoform>
        <id>Q8L4J2-2</id>
        <name>2</name>
        <sequence type="described" ref="VSP_057234"/>
    </isoform>
</comment>
<comment type="domain">
    <text evidence="1">N-terminus mediates homodimerization.</text>
</comment>
<comment type="sequence caution" evidence="6">
    <conflict type="erroneous gene model prediction">
        <sequence resource="EMBL-CDS" id="BAB10643"/>
    </conflict>
</comment>
<protein>
    <recommendedName>
        <fullName evidence="4">Cleavage stimulation factor subunit 50</fullName>
        <shortName evidence="4">AtCstF-50</shortName>
        <shortName evidence="5">AtCstF50</shortName>
    </recommendedName>
    <alternativeName>
        <fullName evidence="6">CF-1 50 kDa subunit</fullName>
    </alternativeName>
    <alternativeName>
        <fullName evidence="6">Cleavage stimulation factor 50 kDa subunit</fullName>
        <shortName evidence="6">CSTF 50 kDa subunit</shortName>
    </alternativeName>
</protein>
<dbReference type="EMBL" id="AF515696">
    <property type="protein sequence ID" value="AAM64165.1"/>
    <property type="molecule type" value="mRNA"/>
</dbReference>
<dbReference type="EMBL" id="AB008269">
    <property type="protein sequence ID" value="BAB10643.1"/>
    <property type="status" value="ALT_SEQ"/>
    <property type="molecule type" value="Genomic_DNA"/>
</dbReference>
<dbReference type="EMBL" id="CP002688">
    <property type="protein sequence ID" value="AED97399.1"/>
    <property type="molecule type" value="Genomic_DNA"/>
</dbReference>
<dbReference type="EMBL" id="CP002688">
    <property type="protein sequence ID" value="AED97400.1"/>
    <property type="molecule type" value="Genomic_DNA"/>
</dbReference>
<dbReference type="EMBL" id="AY136384">
    <property type="protein sequence ID" value="AAM97050.1"/>
    <property type="molecule type" value="mRNA"/>
</dbReference>
<dbReference type="EMBL" id="BT000184">
    <property type="protein sequence ID" value="AAN15503.1"/>
    <property type="molecule type" value="mRNA"/>
</dbReference>
<dbReference type="EMBL" id="AY084766">
    <property type="protein sequence ID" value="AAM61334.1"/>
    <property type="molecule type" value="mRNA"/>
</dbReference>
<dbReference type="RefSeq" id="NP_200902.1">
    <molecule id="Q8L4J2-1"/>
    <property type="nucleotide sequence ID" value="NM_125487.3"/>
</dbReference>
<dbReference type="RefSeq" id="NP_974972.1">
    <molecule id="Q8L4J2-2"/>
    <property type="nucleotide sequence ID" value="NM_203243.2"/>
</dbReference>
<dbReference type="SMR" id="Q8L4J2"/>
<dbReference type="BioGRID" id="21459">
    <property type="interactions" value="3"/>
</dbReference>
<dbReference type="FunCoup" id="Q8L4J2">
    <property type="interactions" value="3947"/>
</dbReference>
<dbReference type="IntAct" id="Q8L4J2">
    <property type="interactions" value="3"/>
</dbReference>
<dbReference type="STRING" id="3702.Q8L4J2"/>
<dbReference type="iPTMnet" id="Q8L4J2"/>
<dbReference type="PaxDb" id="3702-AT5G60940.1"/>
<dbReference type="ProteomicsDB" id="222632">
    <molecule id="Q8L4J2-1"/>
</dbReference>
<dbReference type="EnsemblPlants" id="AT5G60940.1">
    <molecule id="Q8L4J2-1"/>
    <property type="protein sequence ID" value="AT5G60940.1"/>
    <property type="gene ID" value="AT5G60940"/>
</dbReference>
<dbReference type="EnsemblPlants" id="AT5G60940.2">
    <molecule id="Q8L4J2-2"/>
    <property type="protein sequence ID" value="AT5G60940.2"/>
    <property type="gene ID" value="AT5G60940"/>
</dbReference>
<dbReference type="GeneID" id="836215"/>
<dbReference type="Gramene" id="AT5G60940.1">
    <molecule id="Q8L4J2-1"/>
    <property type="protein sequence ID" value="AT5G60940.1"/>
    <property type="gene ID" value="AT5G60940"/>
</dbReference>
<dbReference type="Gramene" id="AT5G60940.2">
    <molecule id="Q8L4J2-2"/>
    <property type="protein sequence ID" value="AT5G60940.2"/>
    <property type="gene ID" value="AT5G60940"/>
</dbReference>
<dbReference type="KEGG" id="ath:AT5G60940"/>
<dbReference type="Araport" id="AT5G60940"/>
<dbReference type="TAIR" id="AT5G60940">
    <property type="gene designation" value="CSTF50"/>
</dbReference>
<dbReference type="eggNOG" id="KOG0640">
    <property type="taxonomic scope" value="Eukaryota"/>
</dbReference>
<dbReference type="InParanoid" id="Q8L4J2"/>
<dbReference type="OMA" id="HTEDYVM"/>
<dbReference type="OrthoDB" id="538223at2759"/>
<dbReference type="PhylomeDB" id="Q8L4J2"/>
<dbReference type="PRO" id="PR:Q8L4J2"/>
<dbReference type="Proteomes" id="UP000006548">
    <property type="component" value="Chromosome 5"/>
</dbReference>
<dbReference type="ExpressionAtlas" id="Q8L4J2">
    <property type="expression patterns" value="baseline and differential"/>
</dbReference>
<dbReference type="GO" id="GO:0005848">
    <property type="term" value="C:mRNA cleavage stimulating factor complex"/>
    <property type="evidence" value="ECO:0007669"/>
    <property type="project" value="InterPro"/>
</dbReference>
<dbReference type="GO" id="GO:0031124">
    <property type="term" value="P:mRNA 3'-end processing"/>
    <property type="evidence" value="ECO:0007669"/>
    <property type="project" value="InterPro"/>
</dbReference>
<dbReference type="CDD" id="cd00200">
    <property type="entry name" value="WD40"/>
    <property type="match status" value="1"/>
</dbReference>
<dbReference type="FunFam" id="2.130.10.10:FF:000736">
    <property type="entry name" value="Cleavage stimulation factor subunit 50"/>
    <property type="match status" value="1"/>
</dbReference>
<dbReference type="Gene3D" id="2.130.10.10">
    <property type="entry name" value="YVTN repeat-like/Quinoprotein amine dehydrogenase"/>
    <property type="match status" value="1"/>
</dbReference>
<dbReference type="InterPro" id="IPR044633">
    <property type="entry name" value="CstF1-like"/>
</dbReference>
<dbReference type="InterPro" id="IPR015943">
    <property type="entry name" value="WD40/YVTN_repeat-like_dom_sf"/>
</dbReference>
<dbReference type="InterPro" id="IPR019775">
    <property type="entry name" value="WD40_repeat_CS"/>
</dbReference>
<dbReference type="InterPro" id="IPR036322">
    <property type="entry name" value="WD40_repeat_dom_sf"/>
</dbReference>
<dbReference type="InterPro" id="IPR001680">
    <property type="entry name" value="WD40_rpt"/>
</dbReference>
<dbReference type="PANTHER" id="PTHR44133">
    <property type="entry name" value="CLEAVAGE STIMULATION FACTOR SUBUNIT 1"/>
    <property type="match status" value="1"/>
</dbReference>
<dbReference type="PANTHER" id="PTHR44133:SF2">
    <property type="entry name" value="CLEAVAGE STIMULATION FACTOR SUBUNIT 1"/>
    <property type="match status" value="1"/>
</dbReference>
<dbReference type="Pfam" id="PF00400">
    <property type="entry name" value="WD40"/>
    <property type="match status" value="6"/>
</dbReference>
<dbReference type="SMART" id="SM00320">
    <property type="entry name" value="WD40"/>
    <property type="match status" value="6"/>
</dbReference>
<dbReference type="SUPFAM" id="SSF50978">
    <property type="entry name" value="WD40 repeat-like"/>
    <property type="match status" value="1"/>
</dbReference>
<dbReference type="PROSITE" id="PS00678">
    <property type="entry name" value="WD_REPEATS_1"/>
    <property type="match status" value="1"/>
</dbReference>
<dbReference type="PROSITE" id="PS50082">
    <property type="entry name" value="WD_REPEATS_2"/>
    <property type="match status" value="4"/>
</dbReference>
<dbReference type="PROSITE" id="PS50294">
    <property type="entry name" value="WD_REPEATS_REGION"/>
    <property type="match status" value="1"/>
</dbReference>
<accession>Q8L4J2</accession>
<accession>F4K0J5</accession>
<accession>Q9FME6</accession>
<proteinExistence type="evidence at protein level"/>
<reference key="1">
    <citation type="journal article" date="2002" name="J. Exp. Bot.">
        <title>Cloning and characterization of Arabidopsis homologues of the animal CstF complex that regulates 3' mRNA cleavage and polyadenylation.</title>
        <authorList>
            <person name="Yao Y."/>
            <person name="Song L."/>
            <person name="Katz Y."/>
            <person name="Galili G."/>
        </authorList>
    </citation>
    <scope>NUCLEOTIDE SEQUENCE [MRNA] (ISOFORM 1)</scope>
    <source>
        <strain>cv. Columbia</strain>
    </source>
</reference>
<reference key="2">
    <citation type="journal article" date="1997" name="DNA Res.">
        <title>Structural analysis of Arabidopsis thaliana chromosome 5. III. Sequence features of the regions of 1,191,918 bp covered by seventeen physically assigned P1 clones.</title>
        <authorList>
            <person name="Nakamura Y."/>
            <person name="Sato S."/>
            <person name="Kaneko T."/>
            <person name="Kotani H."/>
            <person name="Asamizu E."/>
            <person name="Miyajima N."/>
            <person name="Tabata S."/>
        </authorList>
    </citation>
    <scope>NUCLEOTIDE SEQUENCE [LARGE SCALE GENOMIC DNA]</scope>
    <source>
        <strain>cv. Columbia</strain>
    </source>
</reference>
<reference key="3">
    <citation type="journal article" date="2017" name="Plant J.">
        <title>Araport11: a complete reannotation of the Arabidopsis thaliana reference genome.</title>
        <authorList>
            <person name="Cheng C.Y."/>
            <person name="Krishnakumar V."/>
            <person name="Chan A.P."/>
            <person name="Thibaud-Nissen F."/>
            <person name="Schobel S."/>
            <person name="Town C.D."/>
        </authorList>
    </citation>
    <scope>GENOME REANNOTATION</scope>
    <source>
        <strain>cv. Columbia</strain>
    </source>
</reference>
<reference key="4">
    <citation type="journal article" date="2003" name="Science">
        <title>Empirical analysis of transcriptional activity in the Arabidopsis genome.</title>
        <authorList>
            <person name="Yamada K."/>
            <person name="Lim J."/>
            <person name="Dale J.M."/>
            <person name="Chen H."/>
            <person name="Shinn P."/>
            <person name="Palm C.J."/>
            <person name="Southwick A.M."/>
            <person name="Wu H.C."/>
            <person name="Kim C.J."/>
            <person name="Nguyen M."/>
            <person name="Pham P.K."/>
            <person name="Cheuk R.F."/>
            <person name="Karlin-Newmann G."/>
            <person name="Liu S.X."/>
            <person name="Lam B."/>
            <person name="Sakano H."/>
            <person name="Wu T."/>
            <person name="Yu G."/>
            <person name="Miranda M."/>
            <person name="Quach H.L."/>
            <person name="Tripp M."/>
            <person name="Chang C.H."/>
            <person name="Lee J.M."/>
            <person name="Toriumi M.J."/>
            <person name="Chan M.M."/>
            <person name="Tang C.C."/>
            <person name="Onodera C.S."/>
            <person name="Deng J.M."/>
            <person name="Akiyama K."/>
            <person name="Ansari Y."/>
            <person name="Arakawa T."/>
            <person name="Banh J."/>
            <person name="Banno F."/>
            <person name="Bowser L."/>
            <person name="Brooks S.Y."/>
            <person name="Carninci P."/>
            <person name="Chao Q."/>
            <person name="Choy N."/>
            <person name="Enju A."/>
            <person name="Goldsmith A.D."/>
            <person name="Gurjal M."/>
            <person name="Hansen N.F."/>
            <person name="Hayashizaki Y."/>
            <person name="Johnson-Hopson C."/>
            <person name="Hsuan V.W."/>
            <person name="Iida K."/>
            <person name="Karnes M."/>
            <person name="Khan S."/>
            <person name="Koesema E."/>
            <person name="Ishida J."/>
            <person name="Jiang P.X."/>
            <person name="Jones T."/>
            <person name="Kawai J."/>
            <person name="Kamiya A."/>
            <person name="Meyers C."/>
            <person name="Nakajima M."/>
            <person name="Narusaka M."/>
            <person name="Seki M."/>
            <person name="Sakurai T."/>
            <person name="Satou M."/>
            <person name="Tamse R."/>
            <person name="Vaysberg M."/>
            <person name="Wallender E.K."/>
            <person name="Wong C."/>
            <person name="Yamamura Y."/>
            <person name="Yuan S."/>
            <person name="Shinozaki K."/>
            <person name="Davis R.W."/>
            <person name="Theologis A."/>
            <person name="Ecker J.R."/>
        </authorList>
    </citation>
    <scope>NUCLEOTIDE SEQUENCE [LARGE SCALE MRNA] (ISOFORM 1)</scope>
    <source>
        <strain>cv. Columbia</strain>
    </source>
</reference>
<reference key="5">
    <citation type="submission" date="2002-03" db="EMBL/GenBank/DDBJ databases">
        <title>Full-length cDNA from Arabidopsis thaliana.</title>
        <authorList>
            <person name="Brover V.V."/>
            <person name="Troukhan M.E."/>
            <person name="Alexandrov N.A."/>
            <person name="Lu Y.-P."/>
            <person name="Flavell R.B."/>
            <person name="Feldmann K.A."/>
        </authorList>
    </citation>
    <scope>NUCLEOTIDE SEQUENCE [LARGE SCALE MRNA] (ISOFORM 1)</scope>
</reference>
<reference key="6">
    <citation type="journal article" date="2006" name="J. Biol. Chem.">
        <title>An Arabidopsis Fip1 homolog interacts with RNA and provides conceptual links with a number of other polyadenylation factor subunits.</title>
        <authorList>
            <person name="Forbes K.P."/>
            <person name="Addepalli B."/>
            <person name="Hunt A.G."/>
        </authorList>
    </citation>
    <scope>GENE FAMILY</scope>
</reference>
<reference key="7">
    <citation type="journal article" date="2008" name="BMC Genomics">
        <title>Arabidopsis mRNA polyadenylation machinery: comprehensive analysis of protein-protein interactions and gene expression profiling.</title>
        <authorList>
            <person name="Hunt A.G."/>
            <person name="Xu R."/>
            <person name="Addepalli B."/>
            <person name="Rao S."/>
            <person name="Forbes K.P."/>
            <person name="Meeks L.R."/>
            <person name="Xing D."/>
            <person name="Mo M."/>
            <person name="Zhao H."/>
            <person name="Bandyopadhyay A."/>
            <person name="Dampanaboina L."/>
            <person name="Marion A."/>
            <person name="Von Lanken C."/>
            <person name="Li Q.Q."/>
        </authorList>
    </citation>
    <scope>INTERACTION WITH CSTF64; CPSF100; CPSF30; FIPS5 AND PABN3</scope>
    <scope>GENE FAMILY</scope>
    <scope>NOMENCLATURE</scope>
</reference>
<gene>
    <name evidence="4" type="primary">CSTF50</name>
    <name evidence="7" type="ordered locus">At5g60940</name>
    <name evidence="9" type="ORF">MSL3.60</name>
</gene>
<name>CTF50_ARATH</name>
<keyword id="KW-0025">Alternative splicing</keyword>
<keyword id="KW-0507">mRNA processing</keyword>
<keyword id="KW-0539">Nucleus</keyword>
<keyword id="KW-1185">Reference proteome</keyword>
<keyword id="KW-0677">Repeat</keyword>
<keyword id="KW-0853">WD repeat</keyword>
<sequence length="429" mass="47065">MGNSGDLEQALQDGNIFRQLNALIVAHLRHHNLSQVASAVASATMTPLNIEVPPNRLLELVAKGLAAENNGTLRGVSSSVLLPSSYGSITTPRTASIDFSVNHAKGSSKTIPKHESKTLSEHKSVVRCARFSPDGMFFATGGADTSIKLFEVPKVKQMISGDTQARPLIRTFYDHAEPINDLDFHPRSTILISSAKDNCIKFFDFSKTTAKRAFKVFQDTHNVRSISFHPSGEFLLAGTDHPIPHLYDVNTYQCFLPSNFPDSGVSGAINQVRYSSTGSIYITASKDGAIRLFDGVSAKCVRSIGNAHGKSEVTSAVFTKDQRFVLSSGKDSTVKLWEIGSGRMVKEYLGAKRVKLRSQAIFNDTEEFVISIDEASNEVVTWDARTADKVAKWPSNHNGAPRWIEHSPVESVFVTCGIDRSIRFWKESV</sequence>
<organism evidence="8">
    <name type="scientific">Arabidopsis thaliana</name>
    <name type="common">Mouse-ear cress</name>
    <dbReference type="NCBI Taxonomy" id="3702"/>
    <lineage>
        <taxon>Eukaryota</taxon>
        <taxon>Viridiplantae</taxon>
        <taxon>Streptophyta</taxon>
        <taxon>Embryophyta</taxon>
        <taxon>Tracheophyta</taxon>
        <taxon>Spermatophyta</taxon>
        <taxon>Magnoliopsida</taxon>
        <taxon>eudicotyledons</taxon>
        <taxon>Gunneridae</taxon>
        <taxon>Pentapetalae</taxon>
        <taxon>rosids</taxon>
        <taxon>malvids</taxon>
        <taxon>Brassicales</taxon>
        <taxon>Brassicaceae</taxon>
        <taxon>Camelineae</taxon>
        <taxon>Arabidopsis</taxon>
    </lineage>
</organism>
<feature type="chain" id="PRO_0000431325" description="Cleavage stimulation factor subunit 50">
    <location>
        <begin position="1"/>
        <end position="429"/>
    </location>
</feature>
<feature type="repeat" description="WD 1" evidence="2">
    <location>
        <begin position="121"/>
        <end position="160"/>
    </location>
</feature>
<feature type="repeat" description="WD 2" evidence="2">
    <location>
        <begin position="174"/>
        <end position="213"/>
    </location>
</feature>
<feature type="repeat" description="WD 3" evidence="2">
    <location>
        <begin position="218"/>
        <end position="257"/>
    </location>
</feature>
<feature type="repeat" description="WD 4" evidence="2">
    <location>
        <begin position="264"/>
        <end position="303"/>
    </location>
</feature>
<feature type="repeat" description="WD 5" evidence="2">
    <location>
        <begin position="308"/>
        <end position="347"/>
    </location>
</feature>
<feature type="repeat" description="WD 6" evidence="2">
    <location>
        <begin position="351"/>
        <end position="392"/>
    </location>
</feature>
<feature type="repeat" description="WD 7" evidence="2">
    <location>
        <begin position="396"/>
        <end position="429"/>
    </location>
</feature>
<feature type="region of interest" description="Hydrophobic" evidence="1">
    <location>
        <begin position="20"/>
        <end position="41"/>
    </location>
</feature>
<feature type="splice variant" id="VSP_057234" description="In isoform 2.">
    <original>MGNSGDLEQALQDGNIFRQLNALIVAHLRHHNLSQVASAVASATMTPLNIEVPPNRLLELVAKGLAAENNGTLRGVSSSVLLPSSYGSITTPRTASIDF</original>
    <variation>MFGIVRT</variation>
    <location>
        <begin position="1"/>
        <end position="99"/>
    </location>
</feature>